<name>RL35_MACCJ</name>
<organism>
    <name type="scientific">Macrococcus caseolyticus (strain JCSC5402)</name>
    <name type="common">Macrococcoides caseolyticum</name>
    <dbReference type="NCBI Taxonomy" id="458233"/>
    <lineage>
        <taxon>Bacteria</taxon>
        <taxon>Bacillati</taxon>
        <taxon>Bacillota</taxon>
        <taxon>Bacilli</taxon>
        <taxon>Bacillales</taxon>
        <taxon>Staphylococcaceae</taxon>
        <taxon>Macrococcoides</taxon>
    </lineage>
</organism>
<dbReference type="EMBL" id="AP009484">
    <property type="protein sequence ID" value="BAH18051.1"/>
    <property type="molecule type" value="Genomic_DNA"/>
</dbReference>
<dbReference type="RefSeq" id="WP_012657249.1">
    <property type="nucleotide sequence ID" value="NC_011999.1"/>
</dbReference>
<dbReference type="SMR" id="B9E783"/>
<dbReference type="STRING" id="458233.MCCL_1344"/>
<dbReference type="GeneID" id="61128753"/>
<dbReference type="KEGG" id="mcl:MCCL_1344"/>
<dbReference type="eggNOG" id="COG0291">
    <property type="taxonomic scope" value="Bacteria"/>
</dbReference>
<dbReference type="HOGENOM" id="CLU_169643_4_3_9"/>
<dbReference type="OrthoDB" id="47476at2"/>
<dbReference type="Proteomes" id="UP000001383">
    <property type="component" value="Chromosome"/>
</dbReference>
<dbReference type="GO" id="GO:0022625">
    <property type="term" value="C:cytosolic large ribosomal subunit"/>
    <property type="evidence" value="ECO:0007669"/>
    <property type="project" value="TreeGrafter"/>
</dbReference>
<dbReference type="GO" id="GO:0003735">
    <property type="term" value="F:structural constituent of ribosome"/>
    <property type="evidence" value="ECO:0007669"/>
    <property type="project" value="InterPro"/>
</dbReference>
<dbReference type="GO" id="GO:0006412">
    <property type="term" value="P:translation"/>
    <property type="evidence" value="ECO:0007669"/>
    <property type="project" value="UniProtKB-UniRule"/>
</dbReference>
<dbReference type="FunFam" id="4.10.410.60:FF:000001">
    <property type="entry name" value="50S ribosomal protein L35"/>
    <property type="match status" value="1"/>
</dbReference>
<dbReference type="Gene3D" id="4.10.410.60">
    <property type="match status" value="1"/>
</dbReference>
<dbReference type="HAMAP" id="MF_00514">
    <property type="entry name" value="Ribosomal_bL35"/>
    <property type="match status" value="1"/>
</dbReference>
<dbReference type="InterPro" id="IPR001706">
    <property type="entry name" value="Ribosomal_bL35"/>
</dbReference>
<dbReference type="InterPro" id="IPR021137">
    <property type="entry name" value="Ribosomal_bL35-like"/>
</dbReference>
<dbReference type="InterPro" id="IPR037229">
    <property type="entry name" value="Ribosomal_bL35_sf"/>
</dbReference>
<dbReference type="NCBIfam" id="TIGR00001">
    <property type="entry name" value="rpmI_bact"/>
    <property type="match status" value="1"/>
</dbReference>
<dbReference type="PANTHER" id="PTHR33343">
    <property type="entry name" value="54S RIBOSOMAL PROTEIN BL35M"/>
    <property type="match status" value="1"/>
</dbReference>
<dbReference type="PANTHER" id="PTHR33343:SF1">
    <property type="entry name" value="LARGE RIBOSOMAL SUBUNIT PROTEIN BL35M"/>
    <property type="match status" value="1"/>
</dbReference>
<dbReference type="Pfam" id="PF01632">
    <property type="entry name" value="Ribosomal_L35p"/>
    <property type="match status" value="1"/>
</dbReference>
<dbReference type="PRINTS" id="PR00064">
    <property type="entry name" value="RIBOSOMALL35"/>
</dbReference>
<dbReference type="SUPFAM" id="SSF143034">
    <property type="entry name" value="L35p-like"/>
    <property type="match status" value="1"/>
</dbReference>
<sequence length="66" mass="7474">MPKMKTHRGGAKRVKRTGSGKLKRSRAYTSHLFANKSTKQKRGLRKASLVSKGDQKRVAQMLTYVK</sequence>
<proteinExistence type="inferred from homology"/>
<comment type="similarity">
    <text evidence="1">Belongs to the bacterial ribosomal protein bL35 family.</text>
</comment>
<gene>
    <name evidence="1" type="primary">rpmI</name>
    <name type="ordered locus">MCCL_1344</name>
</gene>
<keyword id="KW-1185">Reference proteome</keyword>
<keyword id="KW-0687">Ribonucleoprotein</keyword>
<keyword id="KW-0689">Ribosomal protein</keyword>
<feature type="chain" id="PRO_1000194079" description="Large ribosomal subunit protein bL35">
    <location>
        <begin position="1"/>
        <end position="66"/>
    </location>
</feature>
<feature type="region of interest" description="Disordered" evidence="2">
    <location>
        <begin position="1"/>
        <end position="28"/>
    </location>
</feature>
<feature type="region of interest" description="Disordered" evidence="2">
    <location>
        <begin position="36"/>
        <end position="55"/>
    </location>
</feature>
<feature type="compositionally biased region" description="Basic residues" evidence="2">
    <location>
        <begin position="1"/>
        <end position="26"/>
    </location>
</feature>
<reference key="1">
    <citation type="journal article" date="2009" name="J. Bacteriol.">
        <title>Complete genome sequence of Macrococcus caseolyticus strain JCSCS5402, reflecting the ancestral genome of the human-pathogenic staphylococci.</title>
        <authorList>
            <person name="Baba T."/>
            <person name="Kuwahara-Arai K."/>
            <person name="Uchiyama I."/>
            <person name="Takeuchi F."/>
            <person name="Ito T."/>
            <person name="Hiramatsu K."/>
        </authorList>
    </citation>
    <scope>NUCLEOTIDE SEQUENCE [LARGE SCALE GENOMIC DNA]</scope>
    <source>
        <strain>JCSC5402</strain>
    </source>
</reference>
<evidence type="ECO:0000255" key="1">
    <source>
        <dbReference type="HAMAP-Rule" id="MF_00514"/>
    </source>
</evidence>
<evidence type="ECO:0000256" key="2">
    <source>
        <dbReference type="SAM" id="MobiDB-lite"/>
    </source>
</evidence>
<evidence type="ECO:0000305" key="3"/>
<protein>
    <recommendedName>
        <fullName evidence="1">Large ribosomal subunit protein bL35</fullName>
    </recommendedName>
    <alternativeName>
        <fullName evidence="3">50S ribosomal protein L35</fullName>
    </alternativeName>
</protein>
<accession>B9E783</accession>